<reference key="1">
    <citation type="journal article" date="1997" name="J. Bacteriol.">
        <title>Purification and molecular characterization of glycylglycine endopeptidase produced by Staphylococcus capitis EPK1.</title>
        <authorList>
            <person name="Sugai M."/>
            <person name="Fujiwara T."/>
            <person name="Akiyama T."/>
            <person name="Ohara M."/>
            <person name="Komatsuzawa H."/>
            <person name="Inoue S."/>
            <person name="Suginaka H."/>
        </authorList>
    </citation>
    <scope>NUCLEOTIDE SEQUENCE [GENOMIC DNA]</scope>
    <scope>CHARACTERIZATION</scope>
    <source>
        <strain>EPK1</strain>
    </source>
</reference>
<reference key="2">
    <citation type="journal article" date="2005" name="J. Bacteriol.">
        <title>Mutation analysis of the histidine residues in the glycylglycine endopeptidase ALE-1.</title>
        <authorList>
            <person name="Fujiwara T."/>
            <person name="Aoki S."/>
            <person name="Komatsuzawa H."/>
            <person name="Nishida T."/>
            <person name="Ohara M."/>
            <person name="Suginaka H."/>
            <person name="Sugai M."/>
        </authorList>
    </citation>
    <scope>MUTAGENESIS OF HIS-150; ASP-154; HIS-200; HIS-231 AND HIS-233</scope>
</reference>
<dbReference type="EC" id="3.4.24.75"/>
<dbReference type="EMBL" id="D86328">
    <property type="protein sequence ID" value="BAA13069.1"/>
    <property type="molecule type" value="Genomic_DNA"/>
</dbReference>
<dbReference type="PDB" id="1R77">
    <property type="method" value="X-ray"/>
    <property type="resolution" value="1.75 A"/>
    <property type="chains" value="A/B=271-362"/>
</dbReference>
<dbReference type="PDBsum" id="1R77"/>
<dbReference type="SMR" id="O05156"/>
<dbReference type="MEROPS" id="M23.012"/>
<dbReference type="EvolutionaryTrace" id="O05156"/>
<dbReference type="GO" id="GO:0005576">
    <property type="term" value="C:extracellular region"/>
    <property type="evidence" value="ECO:0007669"/>
    <property type="project" value="UniProtKB-SubCell"/>
</dbReference>
<dbReference type="GO" id="GO:0046872">
    <property type="term" value="F:metal ion binding"/>
    <property type="evidence" value="ECO:0007669"/>
    <property type="project" value="UniProtKB-KW"/>
</dbReference>
<dbReference type="GO" id="GO:0004222">
    <property type="term" value="F:metalloendopeptidase activity"/>
    <property type="evidence" value="ECO:0007669"/>
    <property type="project" value="TreeGrafter"/>
</dbReference>
<dbReference type="GO" id="GO:0071555">
    <property type="term" value="P:cell wall organization"/>
    <property type="evidence" value="ECO:0007669"/>
    <property type="project" value="UniProtKB-KW"/>
</dbReference>
<dbReference type="GO" id="GO:0006508">
    <property type="term" value="P:proteolysis"/>
    <property type="evidence" value="ECO:0007669"/>
    <property type="project" value="UniProtKB-KW"/>
</dbReference>
<dbReference type="CDD" id="cd12797">
    <property type="entry name" value="M23_peptidase"/>
    <property type="match status" value="1"/>
</dbReference>
<dbReference type="Gene3D" id="2.70.70.10">
    <property type="entry name" value="Glucose Permease (Domain IIA)"/>
    <property type="match status" value="1"/>
</dbReference>
<dbReference type="Gene3D" id="2.30.30.40">
    <property type="entry name" value="SH3 Domains"/>
    <property type="match status" value="1"/>
</dbReference>
<dbReference type="InterPro" id="IPR050570">
    <property type="entry name" value="Cell_wall_metabolism_enzyme"/>
</dbReference>
<dbReference type="InterPro" id="IPR011055">
    <property type="entry name" value="Dup_hybrid_motif"/>
</dbReference>
<dbReference type="InterPro" id="IPR016047">
    <property type="entry name" value="Peptidase_M23"/>
</dbReference>
<dbReference type="InterPro" id="IPR003646">
    <property type="entry name" value="SH3-like_bac-type"/>
</dbReference>
<dbReference type="PANTHER" id="PTHR21666:SF270">
    <property type="entry name" value="MUREIN HYDROLASE ACTIVATOR ENVC"/>
    <property type="match status" value="1"/>
</dbReference>
<dbReference type="PANTHER" id="PTHR21666">
    <property type="entry name" value="PEPTIDASE-RELATED"/>
    <property type="match status" value="1"/>
</dbReference>
<dbReference type="Pfam" id="PF01551">
    <property type="entry name" value="Peptidase_M23"/>
    <property type="match status" value="1"/>
</dbReference>
<dbReference type="Pfam" id="PF08460">
    <property type="entry name" value="SH3_5"/>
    <property type="match status" value="1"/>
</dbReference>
<dbReference type="SMART" id="SM00287">
    <property type="entry name" value="SH3b"/>
    <property type="match status" value="1"/>
</dbReference>
<dbReference type="SUPFAM" id="SSF51261">
    <property type="entry name" value="Duplicated hybrid motif"/>
    <property type="match status" value="1"/>
</dbReference>
<dbReference type="PROSITE" id="PS51781">
    <property type="entry name" value="SH3B"/>
    <property type="match status" value="1"/>
</dbReference>
<protein>
    <recommendedName>
        <fullName>Glycyl-glycine endopeptidase ALE-1</fullName>
        <ecNumber>3.4.24.75</ecNumber>
    </recommendedName>
    <alternativeName>
        <fullName>Staphylolytic enzyme ALE-1</fullName>
    </alternativeName>
</protein>
<evidence type="ECO:0000250" key="1"/>
<evidence type="ECO:0000255" key="2">
    <source>
        <dbReference type="PROSITE-ProRule" id="PRU01117"/>
    </source>
</evidence>
<evidence type="ECO:0000256" key="3">
    <source>
        <dbReference type="SAM" id="MobiDB-lite"/>
    </source>
</evidence>
<evidence type="ECO:0000305" key="4"/>
<evidence type="ECO:0007829" key="5">
    <source>
        <dbReference type="PDB" id="1R77"/>
    </source>
</evidence>
<sequence length="362" mass="39350">MDTNRKFTLVKSLSIGLGTFLVGSVFLTVNDEASASTKVDAPKVEQEAPAKADAPKVEQEAPAKADAPKVEQEAPAKVDAPKVEQEAPAKVDAPKVEQEAPAKADAPKVEQKRTFVREAAQSNHSASWLNNYKKGYGYGPYPLGINGGNHYGVDFFMNVGTPVRAISDGKIVEAGWTNYGGGNEIGLVENDGVHRQWYMHLSKFNVKVGDRVKAGQIIGWSGSTGYSTAPHLHFQRMTNSFSNNTAQDPMPFLKSAGYGSNSTSSSNNNGYKTNKYGTLYKSESASFTANTDIITRLTGPFRSMPQSGVLRKGLTIKYDEVMKQDGHVWVGYNTNSGKRVYLPVRTWNESTGELGPLWGTIK</sequence>
<proteinExistence type="evidence at protein level"/>
<organism>
    <name type="scientific">Staphylococcus capitis</name>
    <dbReference type="NCBI Taxonomy" id="29388"/>
    <lineage>
        <taxon>Bacteria</taxon>
        <taxon>Bacillati</taxon>
        <taxon>Bacillota</taxon>
        <taxon>Bacilli</taxon>
        <taxon>Bacillales</taxon>
        <taxon>Staphylococcaceae</taxon>
        <taxon>Staphylococcus</taxon>
    </lineage>
</organism>
<feature type="signal peptide">
    <location>
        <begin position="1"/>
        <end position="35"/>
    </location>
</feature>
<feature type="chain" id="PRO_0000026814" description="Glycyl-glycine endopeptidase ALE-1">
    <location>
        <begin position="36"/>
        <end position="362"/>
    </location>
</feature>
<feature type="domain" description="SH3b" evidence="2">
    <location>
        <begin position="282"/>
        <end position="350"/>
    </location>
</feature>
<feature type="region of interest" description="Disordered" evidence="3">
    <location>
        <begin position="35"/>
        <end position="110"/>
    </location>
</feature>
<feature type="compositionally biased region" description="Basic and acidic residues" evidence="3">
    <location>
        <begin position="40"/>
        <end position="110"/>
    </location>
</feature>
<feature type="active site" evidence="1">
    <location>
        <position position="231"/>
    </location>
</feature>
<feature type="binding site" evidence="4">
    <location>
        <position position="150"/>
    </location>
    <ligand>
        <name>Zn(2+)</name>
        <dbReference type="ChEBI" id="CHEBI:29105"/>
    </ligand>
</feature>
<feature type="binding site" evidence="4">
    <location>
        <position position="154"/>
    </location>
    <ligand>
        <name>Zn(2+)</name>
        <dbReference type="ChEBI" id="CHEBI:29105"/>
    </ligand>
</feature>
<feature type="binding site" evidence="4">
    <location>
        <position position="233"/>
    </location>
    <ligand>
        <name>Zn(2+)</name>
        <dbReference type="ChEBI" id="CHEBI:29105"/>
    </ligand>
</feature>
<feature type="strand" evidence="5">
    <location>
        <begin position="279"/>
        <end position="291"/>
    </location>
</feature>
<feature type="strand" evidence="5">
    <location>
        <begin position="293"/>
        <end position="300"/>
    </location>
</feature>
<feature type="strand" evidence="5">
    <location>
        <begin position="306"/>
        <end position="310"/>
    </location>
</feature>
<feature type="strand" evidence="5">
    <location>
        <begin position="315"/>
        <end position="324"/>
    </location>
</feature>
<feature type="strand" evidence="5">
    <location>
        <begin position="327"/>
        <end position="333"/>
    </location>
</feature>
<feature type="strand" evidence="5">
    <location>
        <begin position="339"/>
        <end position="347"/>
    </location>
</feature>
<feature type="turn" evidence="5">
    <location>
        <begin position="349"/>
        <end position="351"/>
    </location>
</feature>
<feature type="strand" evidence="5">
    <location>
        <begin position="358"/>
        <end position="362"/>
    </location>
</feature>
<accession>O05156</accession>
<comment type="function">
    <text>Lyses staphylococcal cells by hydrolyzing the polyglycine interpeptide bridges of the peptidoglycan.</text>
</comment>
<comment type="catalytic activity">
    <reaction>
        <text>Hydrolysis of the -Gly-|-Gly- bond in the pentaglycine inter-peptide link joining staphylococcal cell wall peptidoglycans.</text>
        <dbReference type="EC" id="3.4.24.75"/>
    </reaction>
</comment>
<comment type="cofactor">
    <cofactor>
        <name>Zn(2+)</name>
        <dbReference type="ChEBI" id="CHEBI:29105"/>
    </cofactor>
    <text>Binds 1 zinc ion per subunit.</text>
</comment>
<comment type="biophysicochemical properties">
    <phDependence>
        <text>Optimum pH is 7-9.</text>
    </phDependence>
</comment>
<comment type="subcellular location">
    <subcellularLocation>
        <location>Secreted</location>
    </subcellularLocation>
</comment>
<comment type="similarity">
    <text evidence="4">Belongs to the peptidase M23B family.</text>
</comment>
<keyword id="KW-0002">3D-structure</keyword>
<keyword id="KW-0961">Cell wall biogenesis/degradation</keyword>
<keyword id="KW-0378">Hydrolase</keyword>
<keyword id="KW-0479">Metal-binding</keyword>
<keyword id="KW-0482">Metalloprotease</keyword>
<keyword id="KW-0645">Protease</keyword>
<keyword id="KW-0677">Repeat</keyword>
<keyword id="KW-0964">Secreted</keyword>
<keyword id="KW-0732">Signal</keyword>
<keyword id="KW-0862">Zinc</keyword>
<name>ALE1_STACP</name>